<accession>Q8IYB3</accession>
<accession>O60585</accession>
<accession>Q5VVN4</accession>
<keyword id="KW-0002">3D-structure</keyword>
<keyword id="KW-0007">Acetylation</keyword>
<keyword id="KW-0025">Alternative splicing</keyword>
<keyword id="KW-0164">Citrullination</keyword>
<keyword id="KW-0903">Direct protein sequencing</keyword>
<keyword id="KW-0238">DNA-binding</keyword>
<keyword id="KW-1017">Isopeptide bond</keyword>
<keyword id="KW-0507">mRNA processing</keyword>
<keyword id="KW-0508">mRNA splicing</keyword>
<keyword id="KW-0539">Nucleus</keyword>
<keyword id="KW-0597">Phosphoprotein</keyword>
<keyword id="KW-1267">Proteomics identification</keyword>
<keyword id="KW-1185">Reference proteome</keyword>
<keyword id="KW-0694">RNA-binding</keyword>
<keyword id="KW-0747">Spliceosome</keyword>
<keyword id="KW-0832">Ubl conjugation</keyword>
<gene>
    <name type="primary">SRRM1</name>
    <name type="synonym">SRM160</name>
</gene>
<feature type="chain" id="PRO_0000076326" description="Serine/arginine repetitive matrix protein 1">
    <location>
        <begin position="1"/>
        <end position="904"/>
    </location>
</feature>
<feature type="domain" description="PWI" evidence="3">
    <location>
        <begin position="27"/>
        <end position="126"/>
    </location>
</feature>
<feature type="region of interest" description="Necessary for mRNA 3'-end cleavage and cytoplasmic accumulation">
    <location>
        <begin position="1"/>
        <end position="156"/>
    </location>
</feature>
<feature type="region of interest" description="Necessary for DNA and RNA-binding">
    <location>
        <begin position="1"/>
        <end position="151"/>
    </location>
</feature>
<feature type="region of interest" description="Disordered" evidence="4">
    <location>
        <begin position="139"/>
        <end position="904"/>
    </location>
</feature>
<feature type="region of interest" description="Necessary for speckles and matrix localization">
    <location>
        <begin position="300"/>
        <end position="688"/>
    </location>
</feature>
<feature type="compositionally biased region" description="Basic and acidic residues" evidence="4">
    <location>
        <begin position="139"/>
        <end position="170"/>
    </location>
</feature>
<feature type="compositionally biased region" description="Basic residues" evidence="4">
    <location>
        <begin position="171"/>
        <end position="207"/>
    </location>
</feature>
<feature type="compositionally biased region" description="Basic and acidic residues" evidence="4">
    <location>
        <begin position="214"/>
        <end position="234"/>
    </location>
</feature>
<feature type="compositionally biased region" description="Basic and acidic residues" evidence="4">
    <location>
        <begin position="246"/>
        <end position="275"/>
    </location>
</feature>
<feature type="compositionally biased region" description="Basic residues" evidence="4">
    <location>
        <begin position="276"/>
        <end position="329"/>
    </location>
</feature>
<feature type="compositionally biased region" description="Basic residues" evidence="4">
    <location>
        <begin position="336"/>
        <end position="351"/>
    </location>
</feature>
<feature type="compositionally biased region" description="Low complexity" evidence="4">
    <location>
        <begin position="352"/>
        <end position="368"/>
    </location>
</feature>
<feature type="compositionally biased region" description="Polar residues" evidence="4">
    <location>
        <begin position="428"/>
        <end position="438"/>
    </location>
</feature>
<feature type="compositionally biased region" description="Low complexity" evidence="4">
    <location>
        <begin position="478"/>
        <end position="501"/>
    </location>
</feature>
<feature type="compositionally biased region" description="Basic and acidic residues" evidence="4">
    <location>
        <begin position="503"/>
        <end position="518"/>
    </location>
</feature>
<feature type="compositionally biased region" description="Basic residues" evidence="4">
    <location>
        <begin position="533"/>
        <end position="560"/>
    </location>
</feature>
<feature type="compositionally biased region" description="Basic residues" evidence="4">
    <location>
        <begin position="567"/>
        <end position="592"/>
    </location>
</feature>
<feature type="compositionally biased region" description="Low complexity" evidence="4">
    <location>
        <begin position="593"/>
        <end position="605"/>
    </location>
</feature>
<feature type="compositionally biased region" description="Basic residues" evidence="4">
    <location>
        <begin position="621"/>
        <end position="636"/>
    </location>
</feature>
<feature type="compositionally biased region" description="Basic residues" evidence="4">
    <location>
        <begin position="649"/>
        <end position="663"/>
    </location>
</feature>
<feature type="compositionally biased region" description="Low complexity" evidence="4">
    <location>
        <begin position="701"/>
        <end position="719"/>
    </location>
</feature>
<feature type="compositionally biased region" description="Low complexity" evidence="4">
    <location>
        <begin position="736"/>
        <end position="759"/>
    </location>
</feature>
<feature type="compositionally biased region" description="Low complexity" evidence="4">
    <location>
        <begin position="771"/>
        <end position="786"/>
    </location>
</feature>
<feature type="compositionally biased region" description="Basic residues" evidence="4">
    <location>
        <begin position="809"/>
        <end position="834"/>
    </location>
</feature>
<feature type="compositionally biased region" description="Low complexity" evidence="4">
    <location>
        <begin position="837"/>
        <end position="866"/>
    </location>
</feature>
<feature type="compositionally biased region" description="Basic and acidic residues" evidence="4">
    <location>
        <begin position="882"/>
        <end position="892"/>
    </location>
</feature>
<feature type="modified residue" description="N-acetylmethionine" evidence="20 37">
    <location>
        <position position="1"/>
    </location>
</feature>
<feature type="modified residue" description="Citrulline" evidence="1">
    <location>
        <position position="7"/>
    </location>
</feature>
<feature type="modified residue" description="N6-acetyllysine" evidence="33">
    <location>
        <position position="140"/>
    </location>
</feature>
<feature type="modified residue" description="Phosphothreonine" evidence="28 31 32 35 36 38 39">
    <location>
        <position position="220"/>
    </location>
</feature>
<feature type="modified residue" description="Phosphoserine" evidence="35">
    <location>
        <position position="227"/>
    </location>
</feature>
<feature type="modified residue" description="Phosphoserine" evidence="35 38 39">
    <location>
        <position position="234"/>
    </location>
</feature>
<feature type="modified residue" description="Phosphoserine" evidence="38">
    <location>
        <position position="240"/>
    </location>
</feature>
<feature type="modified residue" description="Phosphothreonine" evidence="38">
    <location>
        <position position="241"/>
    </location>
</feature>
<feature type="modified residue" description="Phosphoserine" evidence="28 35 36 38 39">
    <location>
        <position position="260"/>
    </location>
</feature>
<feature type="modified residue" description="Phosphoserine" evidence="20 35 36 38 39">
    <location>
        <position position="389"/>
    </location>
</feature>
<feature type="modified residue" description="Phosphoserine" evidence="35 36 38">
    <location>
        <position position="391"/>
    </location>
</feature>
<feature type="modified residue" description="Phosphoserine" evidence="20 35 36 38">
    <location>
        <position position="393"/>
    </location>
</feature>
<feature type="modified residue" description="Phosphoserine" evidence="26 28 35 36 39">
    <location>
        <position position="402"/>
    </location>
</feature>
<feature type="modified residue" description="Phosphothreonine" evidence="26 28 35 39">
    <location>
        <position position="406"/>
    </location>
</feature>
<feature type="modified residue" description="Phosphoserine" evidence="36">
    <location>
        <position position="414"/>
    </location>
</feature>
<feature type="modified residue" description="Phosphothreonine" evidence="36">
    <location>
        <position position="416"/>
    </location>
</feature>
<feature type="modified residue" description="Phosphoserine" evidence="36">
    <location>
        <position position="420"/>
    </location>
</feature>
<feature type="modified residue" description="Phosphoserine" evidence="31 35 36 38">
    <location>
        <position position="429"/>
    </location>
</feature>
<feature type="modified residue" description="Phosphoserine" evidence="31 35 36 38">
    <location>
        <position position="431"/>
    </location>
</feature>
<feature type="modified residue" description="Phosphoserine" evidence="31">
    <location>
        <position position="436"/>
    </location>
</feature>
<feature type="modified residue" description="Phosphoserine" evidence="28 29 35 36 38 39">
    <location>
        <position position="450"/>
    </location>
</feature>
<feature type="modified residue" description="Phosphoserine" evidence="28 29 35 36 38">
    <location>
        <position position="452"/>
    </location>
</feature>
<feature type="modified residue" description="Phosphoserine" evidence="28 35 36 38">
    <location>
        <position position="463"/>
    </location>
</feature>
<feature type="modified residue" description="Phosphoserine" evidence="28 35 36 38">
    <location>
        <position position="465"/>
    </location>
</feature>
<feature type="modified residue" description="Phosphoserine" evidence="27 35">
    <location>
        <position position="478"/>
    </location>
</feature>
<feature type="modified residue" description="Phosphoserine" evidence="39">
    <location>
        <position position="524"/>
    </location>
</feature>
<feature type="modified residue" description="Phosphoserine" evidence="39">
    <location>
        <position position="526"/>
    </location>
</feature>
<feature type="modified residue" description="Phosphoserine" evidence="39">
    <location>
        <position position="528"/>
    </location>
</feature>
<feature type="modified residue" description="Phosphoserine" evidence="39">
    <location>
        <position position="530"/>
    </location>
</feature>
<feature type="modified residue" description="Phosphoserine" evidence="39">
    <location>
        <position position="532"/>
    </location>
</feature>
<feature type="modified residue" description="Phosphoserine" evidence="36 39">
    <location>
        <position position="549"/>
    </location>
</feature>
<feature type="modified residue" description="Phosphoserine" evidence="36 39">
    <location>
        <position position="551"/>
    </location>
</feature>
<feature type="modified residue" description="Phosphothreonine" evidence="36">
    <location>
        <position position="555"/>
    </location>
</feature>
<feature type="modified residue" description="Phosphoserine" evidence="27 28 35 38 39">
    <location>
        <position position="560"/>
    </location>
</feature>
<feature type="modified residue" description="Phosphoserine" evidence="27 28 35 38 39">
    <location>
        <position position="562"/>
    </location>
</feature>
<feature type="modified residue" description="Phosphothreonine" evidence="36">
    <location>
        <position position="572"/>
    </location>
</feature>
<feature type="modified residue" description="Phosphothreonine" evidence="36">
    <location>
        <position position="574"/>
    </location>
</feature>
<feature type="modified residue" description="Phosphothreonine" evidence="36">
    <location>
        <position position="581"/>
    </location>
</feature>
<feature type="modified residue" description="Phosphoserine" evidence="36">
    <location>
        <position position="583"/>
    </location>
</feature>
<feature type="modified residue" description="Phosphotyrosine" evidence="39">
    <location>
        <position position="596"/>
    </location>
</feature>
<feature type="modified residue" description="Phosphoserine" evidence="31 35 36 39">
    <location>
        <position position="597"/>
    </location>
</feature>
<feature type="modified residue" description="Phosphoserine" evidence="31 35 36 38">
    <location>
        <position position="605"/>
    </location>
</feature>
<feature type="modified residue" description="Phosphoserine" evidence="31 35 36 38">
    <location>
        <position position="607"/>
    </location>
</feature>
<feature type="modified residue" description="Phosphothreonine" evidence="27 28 35 38 39">
    <location>
        <position position="614"/>
    </location>
</feature>
<feature type="modified residue" description="Phosphoserine" evidence="27 28 35 36 38 39">
    <location>
        <position position="616"/>
    </location>
</feature>
<feature type="modified residue" description="Phosphoserine" evidence="28 35 36">
    <location>
        <position position="626"/>
    </location>
</feature>
<feature type="modified residue" description="Phosphoserine" evidence="28 35 36">
    <location>
        <position position="628"/>
    </location>
</feature>
<feature type="modified residue" description="Phosphoserine" evidence="35 36">
    <location>
        <position position="636"/>
    </location>
</feature>
<feature type="modified residue" description="Phosphoserine" evidence="35 36 39">
    <location>
        <position position="638"/>
    </location>
</feature>
<feature type="modified residue" description="Phosphoserine" evidence="31 38">
    <location>
        <position position="694"/>
    </location>
</feature>
<feature type="modified residue" description="Phosphoserine" evidence="2">
    <location>
        <position position="695"/>
    </location>
</feature>
<feature type="modified residue" description="Phosphoserine" evidence="31 34 35 36 38">
    <location>
        <position position="696"/>
    </location>
</feature>
<feature type="modified residue" description="Phosphoserine" evidence="36 39">
    <location>
        <position position="705"/>
    </location>
</feature>
<feature type="modified residue" description="Phosphoserine" evidence="36">
    <location>
        <position position="707"/>
    </location>
</feature>
<feature type="modified residue" description="Phosphoserine" evidence="31 38 39">
    <location>
        <position position="713"/>
    </location>
</feature>
<feature type="modified residue" description="Phosphoserine" evidence="31 38">
    <location>
        <position position="715"/>
    </location>
</feature>
<feature type="modified residue" description="Phosphothreonine" evidence="39">
    <location>
        <position position="718"/>
    </location>
</feature>
<feature type="modified residue" description="Phosphoserine" evidence="34 35 36 38 39">
    <location>
        <position position="738"/>
    </location>
</feature>
<feature type="modified residue" description="Phosphoserine" evidence="34 36 38">
    <location>
        <position position="740"/>
    </location>
</feature>
<feature type="modified residue" description="Phosphoserine" evidence="31 38">
    <location>
        <position position="748"/>
    </location>
</feature>
<feature type="modified residue" description="Phosphoserine" evidence="31 35 38">
    <location>
        <position position="752"/>
    </location>
</feature>
<feature type="modified residue" description="Phosphoserine" evidence="27 31 35 36 38">
    <location>
        <position position="754"/>
    </location>
</feature>
<feature type="modified residue" description="Phosphoserine" evidence="27 31 35 36 38">
    <location>
        <position position="756"/>
    </location>
</feature>
<feature type="modified residue" description="Phosphoserine" evidence="31 34 35 36 38 39">
    <location>
        <position position="769"/>
    </location>
</feature>
<feature type="modified residue" description="Phosphoserine" evidence="39">
    <location>
        <position position="773"/>
    </location>
</feature>
<feature type="modified residue" description="Phosphoserine" evidence="31 34 38">
    <location>
        <position position="775"/>
    </location>
</feature>
<feature type="modified residue" description="Phosphoserine" evidence="31">
    <location>
        <position position="777"/>
    </location>
</feature>
<feature type="modified residue" description="Phosphothreonine" evidence="2">
    <location>
        <position position="778"/>
    </location>
</feature>
<feature type="modified residue" description="Phosphoserine" evidence="31 34 35 38 39">
    <location>
        <position position="781"/>
    </location>
</feature>
<feature type="modified residue" description="Phosphoserine" evidence="36 38">
    <location>
        <position position="791"/>
    </location>
</feature>
<feature type="modified residue" description="Phosphothreonine" evidence="36">
    <location>
        <position position="793"/>
    </location>
</feature>
<feature type="modified residue" description="Phosphoserine" evidence="36">
    <location>
        <position position="795"/>
    </location>
</feature>
<feature type="modified residue" description="Phosphoserine" evidence="38">
    <location>
        <position position="797"/>
    </location>
</feature>
<feature type="modified residue" description="Phosphoserine" evidence="38">
    <location>
        <position position="802"/>
    </location>
</feature>
<feature type="modified residue" description="Phosphothreonine" evidence="28 30 34 35 36 38">
    <location>
        <position position="872"/>
    </location>
</feature>
<feature type="modified residue" description="Phosphoserine" evidence="28 30 34 35 36 38 39">
    <location>
        <position position="874"/>
    </location>
</feature>
<feature type="modified residue" description="Phosphoserine" evidence="39">
    <location>
        <position position="901"/>
    </location>
</feature>
<feature type="cross-link" description="Glycyl lysine isopeptide (Lys-Gly) (interchain with G-Cter in SUMO2)" evidence="43">
    <location>
        <position position="127"/>
    </location>
</feature>
<feature type="cross-link" description="Glycyl lysine isopeptide (Lys-Gly) (interchain with G-Cter in SUMO1); alternate" evidence="40">
    <location>
        <position position="231"/>
    </location>
</feature>
<feature type="cross-link" description="Glycyl lysine isopeptide (Lys-Gly) (interchain with G-Cter in SUMO2); alternate" evidence="43">
    <location>
        <position position="231"/>
    </location>
</feature>
<feature type="cross-link" description="Glycyl lysine isopeptide (Lys-Gly) (interchain with G-Cter in SUMO2)" evidence="41 42 43">
    <location>
        <position position="249"/>
    </location>
</feature>
<feature type="cross-link" description="Glycyl lysine isopeptide (Lys-Gly) (interchain with G-Cter in SUMO2)" evidence="43">
    <location>
        <position position="447"/>
    </location>
</feature>
<feature type="cross-link" description="Glycyl lysine isopeptide (Lys-Gly) (interchain with G-Cter in SUMO2)" evidence="43">
    <location>
        <position position="459"/>
    </location>
</feature>
<feature type="cross-link" description="Glycyl lysine isopeptide (Lys-Gly) (interchain with G-Cter in SUMO2)" evidence="43">
    <location>
        <position position="472"/>
    </location>
</feature>
<feature type="cross-link" description="Glycyl lysine isopeptide (Lys-Gly) (interchain with G-Cter in SUMO2)" evidence="43">
    <location>
        <position position="869"/>
    </location>
</feature>
<feature type="splice variant" id="VSP_016522" description="In isoform 2." evidence="21 22">
    <original>RSRS</original>
    <variation>DKM</variation>
    <location>
        <begin position="305"/>
        <end position="308"/>
    </location>
</feature>
<feature type="splice variant" id="VSP_016523" description="In isoform 2." evidence="21 22">
    <location>
        <position position="407"/>
    </location>
</feature>
<feature type="sequence variant" id="VAR_024065" description="In dbSNP:rs17857102." evidence="16">
    <original>R</original>
    <variation>H</variation>
    <location>
        <position position="170"/>
    </location>
</feature>
<feature type="mutagenesis site" description="Strongly reduces DNA and RNA-binding." evidence="13">
    <original>K</original>
    <variation>A</variation>
    <location>
        <position position="20"/>
    </location>
</feature>
<feature type="mutagenesis site" description="Strongly reduces DNA and RNA-binding." evidence="13">
    <original>K</original>
    <variation>A</variation>
    <location>
        <position position="22"/>
    </location>
</feature>
<feature type="mutagenesis site" description="Strongly reduces DNA and RNA-binding." evidence="13">
    <original>K</original>
    <variation>A</variation>
    <location>
        <position position="23"/>
    </location>
</feature>
<feature type="sequence conflict" description="In Ref. 1 and 2." evidence="23" ref="1 2">
    <original>K</original>
    <variation>Q</variation>
    <location>
        <position position="269"/>
    </location>
</feature>
<feature type="sequence conflict" description="In Ref. 4; AAH36187." evidence="23" ref="4">
    <original>R</original>
    <variation>Q</variation>
    <location>
        <position position="275"/>
    </location>
</feature>
<feature type="sequence conflict" description="In Ref. 1 and 2." evidence="23" ref="1 2">
    <original>H</original>
    <variation>D</variation>
    <location>
        <position position="413"/>
    </location>
</feature>
<feature type="turn" evidence="45">
    <location>
        <begin position="11"/>
        <end position="13"/>
    </location>
</feature>
<feature type="helix" evidence="45">
    <location>
        <begin position="20"/>
        <end position="27"/>
    </location>
</feature>
<feature type="turn" evidence="45">
    <location>
        <begin position="32"/>
        <end position="35"/>
    </location>
</feature>
<feature type="helix" evidence="44">
    <location>
        <begin position="40"/>
        <end position="42"/>
    </location>
</feature>
<feature type="turn" evidence="45">
    <location>
        <begin position="46"/>
        <end position="48"/>
    </location>
</feature>
<feature type="helix" evidence="45">
    <location>
        <begin position="49"/>
        <end position="60"/>
    </location>
</feature>
<feature type="helix" evidence="45">
    <location>
        <begin position="65"/>
        <end position="74"/>
    </location>
</feature>
<feature type="strand" evidence="45">
    <location>
        <begin position="77"/>
        <end position="79"/>
    </location>
</feature>
<feature type="helix" evidence="45">
    <location>
        <begin position="82"/>
        <end position="90"/>
    </location>
</feature>
<feature type="helix" evidence="45">
    <location>
        <begin position="97"/>
        <end position="114"/>
    </location>
</feature>
<feature type="strand" evidence="45">
    <location>
        <begin position="115"/>
        <end position="118"/>
    </location>
</feature>
<feature type="helix" evidence="45">
    <location>
        <begin position="121"/>
        <end position="125"/>
    </location>
</feature>
<name>SRRM1_HUMAN</name>
<comment type="function">
    <text evidence="5 6 10 13 15 19 24">Part of pre- and post-splicing multiprotein mRNP complexes. As a component of the minor spliceosome, involved in the splicing of U12-type introns in pre-mRNAs (Probable). Involved in numerous pre-mRNA processing events. Promotes constitutive and exonic splicing enhancer (ESE)-dependent splicing activation by bridging together sequence-specific (SR family proteins, SFRS4, SFRS5 and TRA2B/SFRS10) and basal snRNP (SNRP70 and SNRPA1) factors of the spliceosome. Stimulates mRNA 3'-end cleavage independently of the formation of an exon junction complex. Binds both pre-mRNA and spliced mRNA 20-25 nt upstream of exon-exon junctions. Binds RNA and DNA with low sequence specificity and has similar preference for either double- or single-stranded nucleic acid substrates.</text>
</comment>
<comment type="subunit">
    <text evidence="5 7 8 10 11 12 15 18 19">Identified in the spliceosome C complex. Found in a pre-mRNA splicing complex with SFRS4, SFRS5, SNRP70, SNRPA1, SRRM1 and SRRM2. Found in a pre-mRNA exonic splicing enhancer (ESE) complex with SNRP70, SNRPA1, SRRM1 and TRA2B/SFRS10. Component of the minor spliceosome, which splices U12-type introns (PubMed:33509932). Found in a mRNA splicing-dependent exon junction complex (EJC) with DEK, PRPF8, NCBP1, RBM8A, RNPS1, SRRM1 and ALYREF/THOC4. Interacts with DDX39B, CPSF1, RBM8A, RNPS1, and ALYREF/THOC4. Seems to be a compound of RNA export complexes that are released from speckles in a ATP-dependent manner.</text>
</comment>
<comment type="interaction">
    <interactant intactId="EBI-1055880">
        <id>Q8IYB3</id>
    </interactant>
    <interactant intactId="EBI-750020">
        <id>P49760</id>
        <label>CLK2</label>
    </interactant>
    <organismsDiffer>false</organismsDiffer>
    <experiments>6</experiments>
</comment>
<comment type="interaction">
    <interactant intactId="EBI-1055880">
        <id>Q8IYB3</id>
    </interactant>
    <interactant intactId="EBI-11535445">
        <id>P49760-3</id>
        <label>CLK2</label>
    </interactant>
    <organismsDiffer>false</organismsDiffer>
    <experiments>3</experiments>
</comment>
<comment type="interaction">
    <interactant intactId="EBI-1055880">
        <id>Q8IYB3</id>
    </interactant>
    <interactant intactId="EBI-593303">
        <id>P78362</id>
        <label>SRPK2</label>
    </interactant>
    <organismsDiffer>false</organismsDiffer>
    <experiments>4</experiments>
</comment>
<comment type="interaction">
    <interactant intactId="EBI-1055880">
        <id>Q8IYB3</id>
    </interactant>
    <interactant intactId="EBI-3867173">
        <id>A7MD48</id>
        <label>SRRM4</label>
    </interactant>
    <organismsDiffer>false</organismsDiffer>
    <experiments>3</experiments>
</comment>
<comment type="subcellular location">
    <subcellularLocation>
        <location evidence="14 19">Nucleus matrix</location>
    </subcellularLocation>
    <subcellularLocation>
        <location evidence="9 19">Nucleus speckle</location>
    </subcellularLocation>
</comment>
<comment type="alternative products">
    <event type="alternative splicing"/>
    <isoform>
        <id>Q8IYB3-1</id>
        <name>1</name>
        <sequence type="displayed"/>
    </isoform>
    <isoform>
        <id>Q8IYB3-2</id>
        <name>2</name>
        <sequence type="described" ref="VSP_016522 VSP_016523"/>
    </isoform>
</comment>
<comment type="PTM">
    <text evidence="17">Phosphorylated on multiple serine and threonine residues by DYRK3 during the G2-to-M transition, after the nuclear-envelope breakdown (PubMed:29973724). Phosphorylation by DYRK3 promotes disassembly of nuclear speckles (PubMed:29973724).</text>
</comment>
<comment type="PTM">
    <text evidence="2">Citrullinated by PADI4.</text>
</comment>
<comment type="similarity">
    <text evidence="23">Belongs to the splicing factor SR family.</text>
</comment>
<comment type="sequence caution" evidence="23">
    <conflict type="frameshift">
        <sequence resource="EMBL-CDS" id="AAC09321"/>
    </conflict>
</comment>
<comment type="sequence caution" evidence="23">
    <conflict type="frameshift">
        <sequence resource="EMBL-CDS" id="AAP97290"/>
    </conflict>
</comment>
<protein>
    <recommendedName>
        <fullName>Serine/arginine repetitive matrix protein 1</fullName>
    </recommendedName>
    <alternativeName>
        <fullName>SR-related nuclear matrix protein of 160 kDa</fullName>
        <shortName>SRm160</shortName>
    </alternativeName>
    <alternativeName>
        <fullName>Ser/Arg-related nuclear matrix protein</fullName>
    </alternativeName>
</protein>
<organism>
    <name type="scientific">Homo sapiens</name>
    <name type="common">Human</name>
    <dbReference type="NCBI Taxonomy" id="9606"/>
    <lineage>
        <taxon>Eukaryota</taxon>
        <taxon>Metazoa</taxon>
        <taxon>Chordata</taxon>
        <taxon>Craniata</taxon>
        <taxon>Vertebrata</taxon>
        <taxon>Euteleostomi</taxon>
        <taxon>Mammalia</taxon>
        <taxon>Eutheria</taxon>
        <taxon>Euarchontoglires</taxon>
        <taxon>Primates</taxon>
        <taxon>Haplorrhini</taxon>
        <taxon>Catarrhini</taxon>
        <taxon>Hominidae</taxon>
        <taxon>Homo</taxon>
    </lineage>
</organism>
<evidence type="ECO:0000250" key="1"/>
<evidence type="ECO:0000250" key="2">
    <source>
        <dbReference type="UniProtKB" id="Q52KI8"/>
    </source>
</evidence>
<evidence type="ECO:0000255" key="3">
    <source>
        <dbReference type="PROSITE-ProRule" id="PRU00627"/>
    </source>
</evidence>
<evidence type="ECO:0000256" key="4">
    <source>
        <dbReference type="SAM" id="MobiDB-lite"/>
    </source>
</evidence>
<evidence type="ECO:0000269" key="5">
    <source>
    </source>
</evidence>
<evidence type="ECO:0000269" key="6">
    <source>
    </source>
</evidence>
<evidence type="ECO:0000269" key="7">
    <source>
    </source>
</evidence>
<evidence type="ECO:0000269" key="8">
    <source>
    </source>
</evidence>
<evidence type="ECO:0000269" key="9">
    <source>
    </source>
</evidence>
<evidence type="ECO:0000269" key="10">
    <source>
    </source>
</evidence>
<evidence type="ECO:0000269" key="11">
    <source>
    </source>
</evidence>
<evidence type="ECO:0000269" key="12">
    <source>
    </source>
</evidence>
<evidence type="ECO:0000269" key="13">
    <source>
    </source>
</evidence>
<evidence type="ECO:0000269" key="14">
    <source>
    </source>
</evidence>
<evidence type="ECO:0000269" key="15">
    <source>
    </source>
</evidence>
<evidence type="ECO:0000269" key="16">
    <source>
    </source>
</evidence>
<evidence type="ECO:0000269" key="17">
    <source>
    </source>
</evidence>
<evidence type="ECO:0000269" key="18">
    <source>
    </source>
</evidence>
<evidence type="ECO:0000269" key="19">
    <source>
    </source>
</evidence>
<evidence type="ECO:0000269" key="20">
    <source ref="5"/>
</evidence>
<evidence type="ECO:0000303" key="21">
    <source>
    </source>
</evidence>
<evidence type="ECO:0000303" key="22">
    <source ref="2"/>
</evidence>
<evidence type="ECO:0000305" key="23"/>
<evidence type="ECO:0000305" key="24">
    <source>
    </source>
</evidence>
<evidence type="ECO:0007744" key="25">
    <source>
        <dbReference type="PDB" id="7DVQ"/>
    </source>
</evidence>
<evidence type="ECO:0007744" key="26">
    <source>
    </source>
</evidence>
<evidence type="ECO:0007744" key="27">
    <source>
    </source>
</evidence>
<evidence type="ECO:0007744" key="28">
    <source>
    </source>
</evidence>
<evidence type="ECO:0007744" key="29">
    <source>
    </source>
</evidence>
<evidence type="ECO:0007744" key="30">
    <source>
    </source>
</evidence>
<evidence type="ECO:0007744" key="31">
    <source>
    </source>
</evidence>
<evidence type="ECO:0007744" key="32">
    <source>
    </source>
</evidence>
<evidence type="ECO:0007744" key="33">
    <source>
    </source>
</evidence>
<evidence type="ECO:0007744" key="34">
    <source>
    </source>
</evidence>
<evidence type="ECO:0007744" key="35">
    <source>
    </source>
</evidence>
<evidence type="ECO:0007744" key="36">
    <source>
    </source>
</evidence>
<evidence type="ECO:0007744" key="37">
    <source>
    </source>
</evidence>
<evidence type="ECO:0007744" key="38">
    <source>
    </source>
</evidence>
<evidence type="ECO:0007744" key="39">
    <source>
    </source>
</evidence>
<evidence type="ECO:0007744" key="40">
    <source>
    </source>
</evidence>
<evidence type="ECO:0007744" key="41">
    <source>
    </source>
</evidence>
<evidence type="ECO:0007744" key="42">
    <source>
    </source>
</evidence>
<evidence type="ECO:0007744" key="43">
    <source>
    </source>
</evidence>
<evidence type="ECO:0007829" key="44">
    <source>
        <dbReference type="PDB" id="6FF4"/>
    </source>
</evidence>
<evidence type="ECO:0007829" key="45">
    <source>
        <dbReference type="PDB" id="7DVQ"/>
    </source>
</evidence>
<proteinExistence type="evidence at protein level"/>
<sequence length="904" mass="102335">MDAGFFRGTSAEQDNRFSNKQKKLLKQLKFAECLEKKVDMSKVNLEVIKPWITKRVTEILGFEDDVVIEFIFNQLEVKNPDSKMMQINLTGFLNGKNAREFMGELWPLLLSAQENIAGIPSAFLELKKEEIKQRQIEQEKLASMKKQDEDKDKRDKEEKESSREKRERSRSPRRRKSRSPSPRRRSSPVRRERKRSHSRSPRHRTKSRSPSPAPEKKEKTPELPEPSVKVKEPSVQEATSTSDILKVPKPEPIPEPKEPSPEKNSKKEKEKEKTRPRSRSRSKSRSRTRSRSPSHTRPRRRHRSRSRSYSPRRRPSPRRRPSPRRRTPPRRMPPPPRHRRSRSPVRRRRRSSASLSGSSSSSSSSRSRSPPKKPPKRTSSPPRKTRRLSPSASPPRRRHRPSPPATPPPKTRHSPTPQQSNRTRKSRVSVSPGRTSGKVTKHKGTEKRESPSPAPKPRKVELSESEEDKGGKMAAADSVQQRRQYRRQNQQSSSDSGSSSSSEDERPKRSHVKNGEVGRRRRHSPSRSASPSPRKRQKETSPRGRRRRSPSPPPTRRRRSPSPAPPPRRRRTPTPPPRRRTPSPPPRRRSPSPRRYSPPIQRRYSPSPPPKRRTASPPPPPKRRASPSPPPKRRVSHSPPPKQRSSPVTKRRSPSLSSKHRKGSSPSRSTREARSPQPNKRHSPSPRPRAPQTSSSPPPVRRGASSSPQRRQSPSPSTRPIRRVSRTPEPKKIKKAASPSPQSVRRVSSSRSVSGSPEPAAKKPPAPPSPVQSQSPSTNWSPAVPVKKAKSPTPSPSPPRNSDQEGGGKKKKKKKDKKHKKDKKHKKHKKHKKEKAVAAAAAAAVTPAAIAAATTTLAQEEPVAAPEPKKETESEAEDNLDDLEKHLREKALRSMRKAQVSPQS</sequence>
<dbReference type="EMBL" id="AF048977">
    <property type="protein sequence ID" value="AAC09321.1"/>
    <property type="status" value="ALT_FRAME"/>
    <property type="molecule type" value="mRNA"/>
</dbReference>
<dbReference type="EMBL" id="AF419855">
    <property type="protein sequence ID" value="AAP97290.1"/>
    <property type="status" value="ALT_FRAME"/>
    <property type="molecule type" value="mRNA"/>
</dbReference>
<dbReference type="EMBL" id="AL445648">
    <property type="status" value="NOT_ANNOTATED_CDS"/>
    <property type="molecule type" value="Genomic_DNA"/>
</dbReference>
<dbReference type="EMBL" id="AL445686">
    <property type="status" value="NOT_ANNOTATED_CDS"/>
    <property type="molecule type" value="Genomic_DNA"/>
</dbReference>
<dbReference type="EMBL" id="BC036187">
    <property type="protein sequence ID" value="AAH36187.1"/>
    <property type="molecule type" value="mRNA"/>
</dbReference>
<dbReference type="CCDS" id="CCDS255.1">
    <molecule id="Q8IYB3-1"/>
</dbReference>
<dbReference type="RefSeq" id="NP_001290377.1">
    <property type="nucleotide sequence ID" value="NM_001303448.1"/>
</dbReference>
<dbReference type="RefSeq" id="NP_001290378.1">
    <property type="nucleotide sequence ID" value="NM_001303449.1"/>
</dbReference>
<dbReference type="RefSeq" id="NP_005830.2">
    <molecule id="Q8IYB3-1"/>
    <property type="nucleotide sequence ID" value="NM_005839.3"/>
</dbReference>
<dbReference type="PDB" id="1MP1">
    <property type="method" value="NMR"/>
    <property type="chains" value="A=27-134"/>
</dbReference>
<dbReference type="PDB" id="6FF4">
    <property type="method" value="EM"/>
    <property type="resolution" value="16.00 A"/>
    <property type="chains" value="Y=1-904"/>
</dbReference>
<dbReference type="PDB" id="6FF7">
    <property type="method" value="EM"/>
    <property type="resolution" value="4.50 A"/>
    <property type="chains" value="Y=1-904"/>
</dbReference>
<dbReference type="PDB" id="7ABG">
    <property type="method" value="EM"/>
    <property type="resolution" value="7.80 A"/>
    <property type="chains" value="Y=1-904"/>
</dbReference>
<dbReference type="PDB" id="7ABH">
    <property type="method" value="EM"/>
    <property type="resolution" value="4.50 A"/>
    <property type="chains" value="Y=1-904"/>
</dbReference>
<dbReference type="PDB" id="7ABI">
    <property type="method" value="EM"/>
    <property type="resolution" value="8.00 A"/>
    <property type="chains" value="Y=1-904"/>
</dbReference>
<dbReference type="PDB" id="7DVQ">
    <property type="method" value="EM"/>
    <property type="resolution" value="2.89 A"/>
    <property type="chains" value="8=1-904"/>
</dbReference>
<dbReference type="PDB" id="8I0P">
    <property type="method" value="EM"/>
    <property type="resolution" value="3.40 A"/>
    <property type="chains" value="8=1-904"/>
</dbReference>
<dbReference type="PDB" id="8I0R">
    <property type="method" value="EM"/>
    <property type="resolution" value="3.00 A"/>
    <property type="chains" value="8=1-904"/>
</dbReference>
<dbReference type="PDBsum" id="1MP1"/>
<dbReference type="PDBsum" id="6FF4"/>
<dbReference type="PDBsum" id="6FF7"/>
<dbReference type="PDBsum" id="7ABG"/>
<dbReference type="PDBsum" id="7ABH"/>
<dbReference type="PDBsum" id="7ABI"/>
<dbReference type="PDBsum" id="7DVQ"/>
<dbReference type="PDBsum" id="8I0P"/>
<dbReference type="PDBsum" id="8I0R"/>
<dbReference type="BMRB" id="Q8IYB3"/>
<dbReference type="EMDB" id="EMD-11695"/>
<dbReference type="EMDB" id="EMD-11696"/>
<dbReference type="EMDB" id="EMD-11697"/>
<dbReference type="EMDB" id="EMD-30875"/>
<dbReference type="EMDB" id="EMD-35105"/>
<dbReference type="EMDB" id="EMD-35107"/>
<dbReference type="EMDB" id="EMD-4255"/>
<dbReference type="SMR" id="Q8IYB3"/>
<dbReference type="BioGRID" id="115544">
    <property type="interactions" value="349"/>
</dbReference>
<dbReference type="CORUM" id="Q8IYB3"/>
<dbReference type="FunCoup" id="Q8IYB3">
    <property type="interactions" value="3968"/>
</dbReference>
<dbReference type="IntAct" id="Q8IYB3">
    <property type="interactions" value="110"/>
</dbReference>
<dbReference type="MINT" id="Q8IYB3"/>
<dbReference type="STRING" id="9606.ENSP00000326261"/>
<dbReference type="TCDB" id="3.A.18.1.1">
    <property type="family name" value="the nuclear mrna exporter (mrna-e) family"/>
</dbReference>
<dbReference type="CarbonylDB" id="Q8IYB3"/>
<dbReference type="GlyCosmos" id="Q8IYB3">
    <property type="glycosylation" value="6 sites, 1 glycan"/>
</dbReference>
<dbReference type="GlyGen" id="Q8IYB3">
    <property type="glycosylation" value="10 sites, 1 O-linked glycan (7 sites)"/>
</dbReference>
<dbReference type="iPTMnet" id="Q8IYB3"/>
<dbReference type="PhosphoSitePlus" id="Q8IYB3"/>
<dbReference type="SwissPalm" id="Q8IYB3"/>
<dbReference type="BioMuta" id="SRRM1"/>
<dbReference type="DMDM" id="83305833"/>
<dbReference type="jPOST" id="Q8IYB3"/>
<dbReference type="MassIVE" id="Q8IYB3"/>
<dbReference type="PaxDb" id="9606-ENSP00000326261"/>
<dbReference type="PeptideAtlas" id="Q8IYB3"/>
<dbReference type="ProteomicsDB" id="71140">
    <molecule id="Q8IYB3-1"/>
</dbReference>
<dbReference type="ProteomicsDB" id="71141">
    <molecule id="Q8IYB3-2"/>
</dbReference>
<dbReference type="Pumba" id="Q8IYB3"/>
<dbReference type="Antibodypedia" id="30330">
    <property type="antibodies" value="122 antibodies from 22 providers"/>
</dbReference>
<dbReference type="DNASU" id="10250"/>
<dbReference type="Ensembl" id="ENST00000323848.14">
    <molecule id="Q8IYB3-1"/>
    <property type="protein sequence ID" value="ENSP00000326261.8"/>
    <property type="gene ID" value="ENSG00000133226.19"/>
</dbReference>
<dbReference type="GeneID" id="10250"/>
<dbReference type="KEGG" id="hsa:10250"/>
<dbReference type="MANE-Select" id="ENST00000323848.14">
    <property type="protein sequence ID" value="ENSP00000326261.8"/>
    <property type="RefSeq nucleotide sequence ID" value="NM_005839.4"/>
    <property type="RefSeq protein sequence ID" value="NP_005830.2"/>
</dbReference>
<dbReference type="UCSC" id="uc001bjm.4">
    <molecule id="Q8IYB3-1"/>
    <property type="organism name" value="human"/>
</dbReference>
<dbReference type="AGR" id="HGNC:16638"/>
<dbReference type="CTD" id="10250"/>
<dbReference type="DisGeNET" id="10250"/>
<dbReference type="GeneCards" id="SRRM1"/>
<dbReference type="HGNC" id="HGNC:16638">
    <property type="gene designation" value="SRRM1"/>
</dbReference>
<dbReference type="HPA" id="ENSG00000133226">
    <property type="expression patterns" value="Low tissue specificity"/>
</dbReference>
<dbReference type="MIM" id="605975">
    <property type="type" value="gene"/>
</dbReference>
<dbReference type="neXtProt" id="NX_Q8IYB3"/>
<dbReference type="OpenTargets" id="ENSG00000133226"/>
<dbReference type="PharmGKB" id="PA38177"/>
<dbReference type="VEuPathDB" id="HostDB:ENSG00000133226"/>
<dbReference type="eggNOG" id="KOG2146">
    <property type="taxonomic scope" value="Eukaryota"/>
</dbReference>
<dbReference type="GeneTree" id="ENSGT00730000111080"/>
<dbReference type="HOGENOM" id="CLU_015415_0_0_1"/>
<dbReference type="InParanoid" id="Q8IYB3"/>
<dbReference type="OrthoDB" id="163257at2759"/>
<dbReference type="PAN-GO" id="Q8IYB3">
    <property type="GO annotations" value="2 GO annotations based on evolutionary models"/>
</dbReference>
<dbReference type="PhylomeDB" id="Q8IYB3"/>
<dbReference type="TreeFam" id="TF318972"/>
<dbReference type="PathwayCommons" id="Q8IYB3"/>
<dbReference type="Reactome" id="R-HSA-159236">
    <property type="pathway name" value="Transport of Mature mRNA derived from an Intron-Containing Transcript"/>
</dbReference>
<dbReference type="Reactome" id="R-HSA-72163">
    <property type="pathway name" value="mRNA Splicing - Major Pathway"/>
</dbReference>
<dbReference type="Reactome" id="R-HSA-72187">
    <property type="pathway name" value="mRNA 3'-end processing"/>
</dbReference>
<dbReference type="Reactome" id="R-HSA-73856">
    <property type="pathway name" value="RNA Polymerase II Transcription Termination"/>
</dbReference>
<dbReference type="Reactome" id="R-HSA-9013418">
    <property type="pathway name" value="RHOBTB2 GTPase cycle"/>
</dbReference>
<dbReference type="Reactome" id="R-HSA-9013422">
    <property type="pathway name" value="RHOBTB1 GTPase cycle"/>
</dbReference>
<dbReference type="SignaLink" id="Q8IYB3"/>
<dbReference type="BioGRID-ORCS" id="10250">
    <property type="hits" value="641 hits in 1162 CRISPR screens"/>
</dbReference>
<dbReference type="CD-CODE" id="804901D1">
    <property type="entry name" value="Nuclear speckle"/>
</dbReference>
<dbReference type="ChiTaRS" id="SRRM1">
    <property type="organism name" value="human"/>
</dbReference>
<dbReference type="EvolutionaryTrace" id="Q8IYB3"/>
<dbReference type="GeneWiki" id="SRRM1"/>
<dbReference type="GenomeRNAi" id="10250"/>
<dbReference type="Pharos" id="Q8IYB3">
    <property type="development level" value="Tbio"/>
</dbReference>
<dbReference type="PRO" id="PR:Q8IYB3"/>
<dbReference type="Proteomes" id="UP000005640">
    <property type="component" value="Chromosome 1"/>
</dbReference>
<dbReference type="RNAct" id="Q8IYB3">
    <property type="molecule type" value="protein"/>
</dbReference>
<dbReference type="Bgee" id="ENSG00000133226">
    <property type="expression patterns" value="Expressed in corpus epididymis and 208 other cell types or tissues"/>
</dbReference>
<dbReference type="ExpressionAtlas" id="Q8IYB3">
    <property type="expression patterns" value="baseline and differential"/>
</dbReference>
<dbReference type="GO" id="GO:0071013">
    <property type="term" value="C:catalytic step 2 spliceosome"/>
    <property type="evidence" value="ECO:0000314"/>
    <property type="project" value="UniProtKB"/>
</dbReference>
<dbReference type="GO" id="GO:0005829">
    <property type="term" value="C:cytosol"/>
    <property type="evidence" value="ECO:0000304"/>
    <property type="project" value="Reactome"/>
</dbReference>
<dbReference type="GO" id="GO:0016363">
    <property type="term" value="C:nuclear matrix"/>
    <property type="evidence" value="ECO:0007669"/>
    <property type="project" value="UniProtKB-SubCell"/>
</dbReference>
<dbReference type="GO" id="GO:0016607">
    <property type="term" value="C:nuclear speck"/>
    <property type="evidence" value="ECO:0000314"/>
    <property type="project" value="HPA"/>
</dbReference>
<dbReference type="GO" id="GO:0005654">
    <property type="term" value="C:nucleoplasm"/>
    <property type="evidence" value="ECO:0000304"/>
    <property type="project" value="Reactome"/>
</dbReference>
<dbReference type="GO" id="GO:0005634">
    <property type="term" value="C:nucleus"/>
    <property type="evidence" value="ECO:0000304"/>
    <property type="project" value="ProtInc"/>
</dbReference>
<dbReference type="GO" id="GO:0005681">
    <property type="term" value="C:spliceosomal complex"/>
    <property type="evidence" value="ECO:0000318"/>
    <property type="project" value="GO_Central"/>
</dbReference>
<dbReference type="GO" id="GO:0003677">
    <property type="term" value="F:DNA binding"/>
    <property type="evidence" value="ECO:0007669"/>
    <property type="project" value="UniProtKB-KW"/>
</dbReference>
<dbReference type="GO" id="GO:0003723">
    <property type="term" value="F:RNA binding"/>
    <property type="evidence" value="ECO:0007005"/>
    <property type="project" value="UniProtKB"/>
</dbReference>
<dbReference type="GO" id="GO:0000398">
    <property type="term" value="P:mRNA splicing, via spliceosome"/>
    <property type="evidence" value="ECO:0000305"/>
    <property type="project" value="UniProtKB"/>
</dbReference>
<dbReference type="GO" id="GO:0048024">
    <property type="term" value="P:regulation of mRNA splicing, via spliceosome"/>
    <property type="evidence" value="ECO:0000318"/>
    <property type="project" value="GO_Central"/>
</dbReference>
<dbReference type="GO" id="GO:0008380">
    <property type="term" value="P:RNA splicing"/>
    <property type="evidence" value="ECO:0000304"/>
    <property type="project" value="ProtInc"/>
</dbReference>
<dbReference type="GO" id="GO:0000375">
    <property type="term" value="P:RNA splicing, via transesterification reactions"/>
    <property type="evidence" value="ECO:0000304"/>
    <property type="project" value="UniProtKB"/>
</dbReference>
<dbReference type="DisProt" id="DP02359"/>
<dbReference type="FunFam" id="1.20.1390.10:FF:000002">
    <property type="entry name" value="Serine/arginine repetitive matrix 1 isoform 2"/>
    <property type="match status" value="1"/>
</dbReference>
<dbReference type="Gene3D" id="1.20.1390.10">
    <property type="entry name" value="PWI domain"/>
    <property type="match status" value="1"/>
</dbReference>
<dbReference type="InterPro" id="IPR002483">
    <property type="entry name" value="PWI_dom"/>
</dbReference>
<dbReference type="InterPro" id="IPR036483">
    <property type="entry name" value="PWI_dom_sf"/>
</dbReference>
<dbReference type="InterPro" id="IPR052225">
    <property type="entry name" value="Ser/Arg_repetitive_matrix"/>
</dbReference>
<dbReference type="PANTHER" id="PTHR23148">
    <property type="entry name" value="SERINE/ARGININE REGULATED NUCLEAR MATRIX PROTEIN"/>
    <property type="match status" value="1"/>
</dbReference>
<dbReference type="PANTHER" id="PTHR23148:SF0">
    <property type="entry name" value="SERINE_ARGININE REPETITIVE MATRIX PROTEIN 1"/>
    <property type="match status" value="1"/>
</dbReference>
<dbReference type="Pfam" id="PF01480">
    <property type="entry name" value="PWI"/>
    <property type="match status" value="1"/>
</dbReference>
<dbReference type="SMART" id="SM00311">
    <property type="entry name" value="PWI"/>
    <property type="match status" value="1"/>
</dbReference>
<dbReference type="SUPFAM" id="SSF101233">
    <property type="entry name" value="PWI domain"/>
    <property type="match status" value="1"/>
</dbReference>
<dbReference type="PROSITE" id="PS51025">
    <property type="entry name" value="PWI"/>
    <property type="match status" value="1"/>
</dbReference>
<reference key="1">
    <citation type="journal article" date="1998" name="Genes Dev.">
        <title>A coactivator of pre-mRNA splicing.</title>
        <authorList>
            <person name="Blencowe B.J."/>
            <person name="Issner R."/>
            <person name="Nickerson J.A."/>
            <person name="Sharp P.A."/>
        </authorList>
    </citation>
    <scope>NUCLEOTIDE SEQUENCE [MRNA] (ISOFORM 2)</scope>
    <scope>FUNCTION IN MRNA SPLICING</scope>
    <scope>IDENTIFICATION IN A PRE-MRNA SPLICING COMPLEX WITH SFRS4; SFRS5; SNRP70; SNRPA1 AND SRRM2</scope>
    <scope>SUBCELLULAR LOCATION</scope>
</reference>
<reference key="2">
    <citation type="submission" date="2001-09" db="EMBL/GenBank/DDBJ databases">
        <title>Molecular cloning and characterization of human SRM160 gene.</title>
        <authorList>
            <person name="Guo J.H."/>
            <person name="Yu L."/>
        </authorList>
    </citation>
    <scope>NUCLEOTIDE SEQUENCE [LARGE SCALE MRNA] (ISOFORM 2)</scope>
</reference>
<reference key="3">
    <citation type="journal article" date="2006" name="Nature">
        <title>The DNA sequence and biological annotation of human chromosome 1.</title>
        <authorList>
            <person name="Gregory S.G."/>
            <person name="Barlow K.F."/>
            <person name="McLay K.E."/>
            <person name="Kaul R."/>
            <person name="Swarbreck D."/>
            <person name="Dunham A."/>
            <person name="Scott C.E."/>
            <person name="Howe K.L."/>
            <person name="Woodfine K."/>
            <person name="Spencer C.C.A."/>
            <person name="Jones M.C."/>
            <person name="Gillson C."/>
            <person name="Searle S."/>
            <person name="Zhou Y."/>
            <person name="Kokocinski F."/>
            <person name="McDonald L."/>
            <person name="Evans R."/>
            <person name="Phillips K."/>
            <person name="Atkinson A."/>
            <person name="Cooper R."/>
            <person name="Jones C."/>
            <person name="Hall R.E."/>
            <person name="Andrews T.D."/>
            <person name="Lloyd C."/>
            <person name="Ainscough R."/>
            <person name="Almeida J.P."/>
            <person name="Ambrose K.D."/>
            <person name="Anderson F."/>
            <person name="Andrew R.W."/>
            <person name="Ashwell R.I.S."/>
            <person name="Aubin K."/>
            <person name="Babbage A.K."/>
            <person name="Bagguley C.L."/>
            <person name="Bailey J."/>
            <person name="Beasley H."/>
            <person name="Bethel G."/>
            <person name="Bird C.P."/>
            <person name="Bray-Allen S."/>
            <person name="Brown J.Y."/>
            <person name="Brown A.J."/>
            <person name="Buckley D."/>
            <person name="Burton J."/>
            <person name="Bye J."/>
            <person name="Carder C."/>
            <person name="Chapman J.C."/>
            <person name="Clark S.Y."/>
            <person name="Clarke G."/>
            <person name="Clee C."/>
            <person name="Cobley V."/>
            <person name="Collier R.E."/>
            <person name="Corby N."/>
            <person name="Coville G.J."/>
            <person name="Davies J."/>
            <person name="Deadman R."/>
            <person name="Dunn M."/>
            <person name="Earthrowl M."/>
            <person name="Ellington A.G."/>
            <person name="Errington H."/>
            <person name="Frankish A."/>
            <person name="Frankland J."/>
            <person name="French L."/>
            <person name="Garner P."/>
            <person name="Garnett J."/>
            <person name="Gay L."/>
            <person name="Ghori M.R.J."/>
            <person name="Gibson R."/>
            <person name="Gilby L.M."/>
            <person name="Gillett W."/>
            <person name="Glithero R.J."/>
            <person name="Grafham D.V."/>
            <person name="Griffiths C."/>
            <person name="Griffiths-Jones S."/>
            <person name="Grocock R."/>
            <person name="Hammond S."/>
            <person name="Harrison E.S.I."/>
            <person name="Hart E."/>
            <person name="Haugen E."/>
            <person name="Heath P.D."/>
            <person name="Holmes S."/>
            <person name="Holt K."/>
            <person name="Howden P.J."/>
            <person name="Hunt A.R."/>
            <person name="Hunt S.E."/>
            <person name="Hunter G."/>
            <person name="Isherwood J."/>
            <person name="James R."/>
            <person name="Johnson C."/>
            <person name="Johnson D."/>
            <person name="Joy A."/>
            <person name="Kay M."/>
            <person name="Kershaw J.K."/>
            <person name="Kibukawa M."/>
            <person name="Kimberley A.M."/>
            <person name="King A."/>
            <person name="Knights A.J."/>
            <person name="Lad H."/>
            <person name="Laird G."/>
            <person name="Lawlor S."/>
            <person name="Leongamornlert D.A."/>
            <person name="Lloyd D.M."/>
            <person name="Loveland J."/>
            <person name="Lovell J."/>
            <person name="Lush M.J."/>
            <person name="Lyne R."/>
            <person name="Martin S."/>
            <person name="Mashreghi-Mohammadi M."/>
            <person name="Matthews L."/>
            <person name="Matthews N.S.W."/>
            <person name="McLaren S."/>
            <person name="Milne S."/>
            <person name="Mistry S."/>
            <person name="Moore M.J.F."/>
            <person name="Nickerson T."/>
            <person name="O'Dell C.N."/>
            <person name="Oliver K."/>
            <person name="Palmeiri A."/>
            <person name="Palmer S.A."/>
            <person name="Parker A."/>
            <person name="Patel D."/>
            <person name="Pearce A.V."/>
            <person name="Peck A.I."/>
            <person name="Pelan S."/>
            <person name="Phelps K."/>
            <person name="Phillimore B.J."/>
            <person name="Plumb R."/>
            <person name="Rajan J."/>
            <person name="Raymond C."/>
            <person name="Rouse G."/>
            <person name="Saenphimmachak C."/>
            <person name="Sehra H.K."/>
            <person name="Sheridan E."/>
            <person name="Shownkeen R."/>
            <person name="Sims S."/>
            <person name="Skuce C.D."/>
            <person name="Smith M."/>
            <person name="Steward C."/>
            <person name="Subramanian S."/>
            <person name="Sycamore N."/>
            <person name="Tracey A."/>
            <person name="Tromans A."/>
            <person name="Van Helmond Z."/>
            <person name="Wall M."/>
            <person name="Wallis J.M."/>
            <person name="White S."/>
            <person name="Whitehead S.L."/>
            <person name="Wilkinson J.E."/>
            <person name="Willey D.L."/>
            <person name="Williams H."/>
            <person name="Wilming L."/>
            <person name="Wray P.W."/>
            <person name="Wu Z."/>
            <person name="Coulson A."/>
            <person name="Vaudin M."/>
            <person name="Sulston J.E."/>
            <person name="Durbin R.M."/>
            <person name="Hubbard T."/>
            <person name="Wooster R."/>
            <person name="Dunham I."/>
            <person name="Carter N.P."/>
            <person name="McVean G."/>
            <person name="Ross M.T."/>
            <person name="Harrow J."/>
            <person name="Olson M.V."/>
            <person name="Beck S."/>
            <person name="Rogers J."/>
            <person name="Bentley D.R."/>
        </authorList>
    </citation>
    <scope>NUCLEOTIDE SEQUENCE [LARGE SCALE GENOMIC DNA]</scope>
</reference>
<reference key="4">
    <citation type="journal article" date="2004" name="Genome Res.">
        <title>The status, quality, and expansion of the NIH full-length cDNA project: the Mammalian Gene Collection (MGC).</title>
        <authorList>
            <consortium name="The MGC Project Team"/>
        </authorList>
    </citation>
    <scope>NUCLEOTIDE SEQUENCE [LARGE SCALE MRNA] (ISOFORM 1)</scope>
    <scope>VARIANT HIS-170</scope>
    <source>
        <tissue>Testis</tissue>
    </source>
</reference>
<reference key="5">
    <citation type="submission" date="2008-12" db="UniProtKB">
        <authorList>
            <person name="Bienvenut W.V."/>
            <person name="Heiserich L."/>
            <person name="Boulahbel H."/>
            <person name="Gottlieb E."/>
            <person name="Lilla S."/>
            <person name="von Kriegsheim A."/>
            <person name="Lempens A."/>
            <person name="Kolch W."/>
        </authorList>
    </citation>
    <scope>PROTEIN SEQUENCE OF 1-7; 30-36; 43-54; 84-96; 230-246; 387-396; 690-701 AND 870-885</scope>
    <scope>ACETYLATION AT MET-1</scope>
    <scope>PHOSPHORYLATION AT SER-389 AND SER-393</scope>
    <scope>IDENTIFICATION BY MASS SPECTROMETRY</scope>
    <source>
        <tissue>Colon carcinoma</tissue>
        <tissue>Ovarian carcinoma</tissue>
    </source>
</reference>
<reference key="6">
    <citation type="journal article" date="1999" name="Proc. Natl. Acad. Sci. U.S.A.">
        <title>The SRm160/300 splicing coactivator is required for exon-enhancer function.</title>
        <authorList>
            <person name="Eldridge A.G."/>
            <person name="Li Y."/>
            <person name="Sharp P.A."/>
            <person name="Blencowe B.J."/>
        </authorList>
    </citation>
    <scope>FUNCTION IN MRNA EXONIC SPLICING ENHANCER (ESE)-DEPENDENT SPLICING</scope>
    <scope>IDENTIFICATION IN A MRNA EXONIC SPLICING ENHANCER (ESE) COMPLEX WITH SNRP70; SNRPA1 AND TRA2B</scope>
</reference>
<reference key="7">
    <citation type="journal article" date="2000" name="EMBO J.">
        <title>The spliceosome deposits multiple proteins 20-24 nucleotides upstream of mRNA exon-exon junctions.</title>
        <authorList>
            <person name="Le Hir H."/>
            <person name="Izaurralde E."/>
            <person name="Maquat L.E."/>
            <person name="Moore M.J."/>
        </authorList>
    </citation>
    <scope>IDENTIFICATION IN A MRNA SPLICING-DEPENDENT EXON JUNCTION COMPLEX (EJC) WITH DEK; RBM8A; RNPS1 AND ALYREF/THOC4</scope>
</reference>
<reference key="8">
    <citation type="journal article" date="2000" name="Genes Dev.">
        <title>Pre-mRNA splicing alters mRNP composition: evidence for stable association of proteins at exon-exon junctions.</title>
        <authorList>
            <person name="Le Hir H."/>
            <person name="Moore M.J."/>
            <person name="Maquat L.E."/>
        </authorList>
    </citation>
    <scope>IDENTIFICATION IN A MRNA SPLICING-DEPENDENT EXON JUNCTION COMPLEX (EJC) WITH PRPF8</scope>
    <scope>ASSOCIATION WITH THE SPLICEOSOME</scope>
    <scope>RNA-BINDING</scope>
</reference>
<reference key="9">
    <citation type="journal article" date="2000" name="RNA">
        <title>The SRm160/300 splicing coactivator subunits.</title>
        <authorList>
            <person name="Blencowe B.J."/>
            <person name="Bauren G."/>
            <person name="Eldridge A.G."/>
            <person name="Issner R."/>
            <person name="Nickerson J.A."/>
            <person name="Rosonina E."/>
            <person name="Sharp P.A."/>
        </authorList>
    </citation>
    <scope>FUNCTION IN MRNA SPLICING</scope>
</reference>
<reference key="10">
    <citation type="journal article" date="2001" name="Science">
        <title>Communication of the position of exon-exon junctions to the mRNA surveillance machinery by the protein RNPS1.</title>
        <authorList>
            <person name="Lykke-Andersen J."/>
            <person name="Shu M.-D."/>
            <person name="Steitz J.A."/>
        </authorList>
    </citation>
    <scope>RNA-BINDING</scope>
    <scope>SUBCELLULAR LOCATION</scope>
</reference>
<reference key="11">
    <citation type="journal article" date="2002" name="EMBO J.">
        <title>The exon junction complex is detected on CBP80-bound but not eIF4E-bound mRNA in mammalian cells: dynamics of mRNP remodeling.</title>
        <authorList>
            <person name="Lejeune F."/>
            <person name="Ishigaki Y."/>
            <person name="Li X."/>
            <person name="Maquat L.E."/>
        </authorList>
    </citation>
    <scope>INTERACTION WITH THE EXON JUNCTION COMPLEX</scope>
</reference>
<reference key="12">
    <citation type="journal article" date="2002" name="Mol. Cell. Biol.">
        <title>SRm160 splicing coactivator promotes transcript 3'-end cleavage.</title>
        <authorList>
            <person name="McCracken S."/>
            <person name="Lambermon M."/>
            <person name="Blencowe B.J."/>
        </authorList>
    </citation>
    <scope>FUNCTION IN MRNA SPLICING AND 3'-END FORMATION</scope>
    <scope>INTERACTION WITH CPSF1</scope>
</reference>
<reference key="13">
    <citation type="journal article" date="2002" name="RNA">
        <title>Purification and characterization of native spliceosomes suitable for three-dimensional structural analysis.</title>
        <authorList>
            <person name="Jurica M.S."/>
            <person name="Licklider L.J."/>
            <person name="Gygi S.P."/>
            <person name="Grigorieff N."/>
            <person name="Moore M.J."/>
        </authorList>
    </citation>
    <scope>IDENTIFICATION BY MASS SPECTROMETRY</scope>
    <scope>IDENTIFICATION IN THE SPLICEOSOMAL C COMPLEX</scope>
</reference>
<reference key="14">
    <citation type="journal article" date="2003" name="J. Biol. Chem.">
        <title>An evolutionarily conserved role for SRm160 in 3'-end processing that functions independently of exon junction complex formation.</title>
        <authorList>
            <person name="McCracken S."/>
            <person name="Longman D."/>
            <person name="Johnstone I.L."/>
            <person name="Caceres J.F."/>
            <person name="Blencowe B.J."/>
        </authorList>
    </citation>
    <scope>FUNCTION IN MRNA 3'-END FORMATION</scope>
    <scope>INTERACTION WITH DDX39B; RBM8A; RNPS1 AND ALYREF/THOC4</scope>
</reference>
<reference key="15">
    <citation type="journal article" date="2003" name="Proc. Natl. Acad. Sci. U.S.A.">
        <title>The spatial targeting and nuclear matrix binding domains of SRm160.</title>
        <authorList>
            <person name="Wagner S."/>
            <person name="Chiosea S."/>
            <person name="Nickerson J.A."/>
        </authorList>
    </citation>
    <scope>SUBCELLULAR LOCATION</scope>
</reference>
<reference key="16">
    <citation type="journal article" date="2004" name="Anal. Chem.">
        <title>Robust phosphoproteomic profiling of tyrosine phosphorylation sites from human T cells using immobilized metal affinity chromatography and tandem mass spectrometry.</title>
        <authorList>
            <person name="Brill L.M."/>
            <person name="Salomon A.R."/>
            <person name="Ficarro S.B."/>
            <person name="Mukherji M."/>
            <person name="Stettler-Gill M."/>
            <person name="Peters E.C."/>
        </authorList>
    </citation>
    <scope>PHOSPHORYLATION [LARGE SCALE ANALYSIS] AT SER-402 AND THR-406</scope>
    <scope>IDENTIFICATION BY MASS SPECTROMETRY [LARGE SCALE ANALYSIS]</scope>
    <source>
        <tissue>Leukemic T-cell</tissue>
    </source>
</reference>
<reference key="17">
    <citation type="journal article" date="2004" name="J. Cell Biol.">
        <title>In vitro FRAP reveals the ATP-dependent nuclear mobilization of the exon junction complex protein SRm160.</title>
        <authorList>
            <person name="Wagner S."/>
            <person name="Chiosea S."/>
            <person name="Ivshina M."/>
            <person name="Nickerson J.A."/>
        </authorList>
    </citation>
    <scope>ATP-DEPENDENT MOBILITY OF A SRRM1-COMPLEX</scope>
</reference>
<reference key="18">
    <citation type="journal article" date="2006" name="Cell">
        <title>Global, in vivo, and site-specific phosphorylation dynamics in signaling networks.</title>
        <authorList>
            <person name="Olsen J.V."/>
            <person name="Blagoev B."/>
            <person name="Gnad F."/>
            <person name="Macek B."/>
            <person name="Kumar C."/>
            <person name="Mortensen P."/>
            <person name="Mann M."/>
        </authorList>
    </citation>
    <scope>PHOSPHORYLATION [LARGE SCALE ANALYSIS] AT THR-220; SER-260; SER-402; THR-406; SER-450; SER-452; SER-463; SER-465; SER-560; SER-562; THR-614; SER-616; SER-626; SER-628; THR-872 AND SER-874</scope>
    <scope>IDENTIFICATION BY MASS SPECTROMETRY [LARGE SCALE ANALYSIS]</scope>
    <source>
        <tissue>Cervix carcinoma</tissue>
    </source>
</reference>
<reference key="19">
    <citation type="journal article" date="2006" name="Nat. Biotechnol.">
        <title>A probability-based approach for high-throughput protein phosphorylation analysis and site localization.</title>
        <authorList>
            <person name="Beausoleil S.A."/>
            <person name="Villen J."/>
            <person name="Gerber S.A."/>
            <person name="Rush J."/>
            <person name="Gygi S.P."/>
        </authorList>
    </citation>
    <scope>PHOSPHORYLATION [LARGE SCALE ANALYSIS] AT SER-478; SER-560; SER-562; THR-614; SER-616; SER-754 AND SER-756</scope>
    <scope>IDENTIFICATION BY MASS SPECTROMETRY [LARGE SCALE ANALYSIS]</scope>
    <source>
        <tissue>Cervix carcinoma</tissue>
    </source>
</reference>
<reference key="20">
    <citation type="journal article" date="2007" name="J. Proteome Res.">
        <title>Improved titanium dioxide enrichment of phosphopeptides from HeLa cells and high confident phosphopeptide identification by cross-validation of MS/MS and MS/MS/MS spectra.</title>
        <authorList>
            <person name="Yu L.R."/>
            <person name="Zhu Z."/>
            <person name="Chan K.C."/>
            <person name="Issaq H.J."/>
            <person name="Dimitrov D.S."/>
            <person name="Veenstra T.D."/>
        </authorList>
    </citation>
    <scope>PHOSPHORYLATION [LARGE SCALE ANALYSIS] AT SER-450 AND SER-452</scope>
    <scope>IDENTIFICATION BY MASS SPECTROMETRY [LARGE SCALE ANALYSIS]</scope>
    <source>
        <tissue>Cervix carcinoma</tissue>
    </source>
</reference>
<reference key="21">
    <citation type="journal article" date="2008" name="J. Proteome Res.">
        <title>Phosphorylation analysis of primary human T lymphocytes using sequential IMAC and titanium oxide enrichment.</title>
        <authorList>
            <person name="Carrascal M."/>
            <person name="Ovelleiro D."/>
            <person name="Casas V."/>
            <person name="Gay M."/>
            <person name="Abian J."/>
        </authorList>
    </citation>
    <scope>PHOSPHORYLATION [LARGE SCALE ANALYSIS] AT THR-220</scope>
    <scope>IDENTIFICATION BY MASS SPECTROMETRY [LARGE SCALE ANALYSIS]</scope>
    <source>
        <tissue>T-cell</tissue>
    </source>
</reference>
<reference key="22">
    <citation type="journal article" date="2008" name="Proc. Natl. Acad. Sci. U.S.A.">
        <title>A quantitative atlas of mitotic phosphorylation.</title>
        <authorList>
            <person name="Dephoure N."/>
            <person name="Zhou C."/>
            <person name="Villen J."/>
            <person name="Beausoleil S.A."/>
            <person name="Bakalarski C.E."/>
            <person name="Elledge S.J."/>
            <person name="Gygi S.P."/>
        </authorList>
    </citation>
    <scope>PHOSPHORYLATION [LARGE SCALE ANALYSIS] AT THR-220; SER-429; SER-431; SER-436; SER-597; SER-605; SER-607; SER-694; SER-696; SER-713; SER-715; SER-748; SER-752; SER-754; SER-756; SER-769; SER-775; SER-777 AND SER-781</scope>
    <scope>IDENTIFICATION BY MASS SPECTROMETRY [LARGE SCALE ANALYSIS]</scope>
    <source>
        <tissue>Cervix carcinoma</tissue>
    </source>
</reference>
<reference key="23">
    <citation type="journal article" date="2008" name="Proteomics">
        <title>Large-scale phosphoproteome analysis of human liver tissue by enrichment and fractionation of phosphopeptides with strong anion exchange chromatography.</title>
        <authorList>
            <person name="Han G."/>
            <person name="Ye M."/>
            <person name="Zhou H."/>
            <person name="Jiang X."/>
            <person name="Feng S."/>
            <person name="Jiang X."/>
            <person name="Tian R."/>
            <person name="Wan D."/>
            <person name="Zou H."/>
            <person name="Gu J."/>
        </authorList>
    </citation>
    <scope>PHOSPHORYLATION [LARGE SCALE ANALYSIS] AT THR-872 AND SER-874</scope>
    <scope>IDENTIFICATION BY MASS SPECTROMETRY [LARGE SCALE ANALYSIS]</scope>
    <source>
        <tissue>Liver</tissue>
    </source>
</reference>
<reference key="24">
    <citation type="journal article" date="2009" name="Anal. Chem.">
        <title>Lys-N and trypsin cover complementary parts of the phosphoproteome in a refined SCX-based approach.</title>
        <authorList>
            <person name="Gauci S."/>
            <person name="Helbig A.O."/>
            <person name="Slijper M."/>
            <person name="Krijgsveld J."/>
            <person name="Heck A.J."/>
            <person name="Mohammed S."/>
        </authorList>
    </citation>
    <scope>IDENTIFICATION BY MASS SPECTROMETRY [LARGE SCALE ANALYSIS]</scope>
</reference>
<reference key="25">
    <citation type="journal article" date="2009" name="Sci. Signal.">
        <title>Quantitative phosphoproteomic analysis of T cell receptor signaling reveals system-wide modulation of protein-protein interactions.</title>
        <authorList>
            <person name="Mayya V."/>
            <person name="Lundgren D.H."/>
            <person name="Hwang S.-I."/>
            <person name="Rezaul K."/>
            <person name="Wu L."/>
            <person name="Eng J.K."/>
            <person name="Rodionov V."/>
            <person name="Han D.K."/>
        </authorList>
    </citation>
    <scope>PHOSPHORYLATION [LARGE SCALE ANALYSIS] AT SER-696; SER-738; SER-740; SER-769; SER-775; SER-781; THR-872 AND SER-874</scope>
    <scope>IDENTIFICATION BY MASS SPECTROMETRY [LARGE SCALE ANALYSIS]</scope>
    <source>
        <tissue>Leukemic T-cell</tissue>
    </source>
</reference>
<reference key="26">
    <citation type="journal article" date="2009" name="Science">
        <title>Lysine acetylation targets protein complexes and co-regulates major cellular functions.</title>
        <authorList>
            <person name="Choudhary C."/>
            <person name="Kumar C."/>
            <person name="Gnad F."/>
            <person name="Nielsen M.L."/>
            <person name="Rehman M."/>
            <person name="Walther T.C."/>
            <person name="Olsen J.V."/>
            <person name="Mann M."/>
        </authorList>
    </citation>
    <scope>ACETYLATION [LARGE SCALE ANALYSIS] AT LYS-140</scope>
    <scope>IDENTIFICATION BY MASS SPECTROMETRY [LARGE SCALE ANALYSIS]</scope>
</reference>
<reference key="27">
    <citation type="journal article" date="2010" name="Sci. Signal.">
        <title>Quantitative phosphoproteomics reveals widespread full phosphorylation site occupancy during mitosis.</title>
        <authorList>
            <person name="Olsen J.V."/>
            <person name="Vermeulen M."/>
            <person name="Santamaria A."/>
            <person name="Kumar C."/>
            <person name="Miller M.L."/>
            <person name="Jensen L.J."/>
            <person name="Gnad F."/>
            <person name="Cox J."/>
            <person name="Jensen T.S."/>
            <person name="Nigg E.A."/>
            <person name="Brunak S."/>
            <person name="Mann M."/>
        </authorList>
    </citation>
    <scope>PHOSPHORYLATION [LARGE SCALE ANALYSIS] AT THR-220; SER-227; SER-234; SER-260; SER-389; SER-391; SER-393; SER-402; THR-406; SER-429; SER-431; SER-450; SER-452; SER-463; SER-465; SER-478; SER-560; SER-562; SER-597; SER-605; SER-607; THR-614; SER-616; SER-626; SER-628; SER-636; SER-638; SER-696; SER-738; SER-752; SER-754; SER-756; SER-769; SER-781; THR-872 AND SER-874</scope>
    <scope>IDENTIFICATION BY MASS SPECTROMETRY [LARGE SCALE ANALYSIS]</scope>
    <source>
        <tissue>Cervix carcinoma</tissue>
    </source>
</reference>
<reference key="28">
    <citation type="journal article" date="2011" name="BMC Syst. Biol.">
        <title>Initial characterization of the human central proteome.</title>
        <authorList>
            <person name="Burkard T.R."/>
            <person name="Planyavsky M."/>
            <person name="Kaupe I."/>
            <person name="Breitwieser F.P."/>
            <person name="Buerckstuemmer T."/>
            <person name="Bennett K.L."/>
            <person name="Superti-Furga G."/>
            <person name="Colinge J."/>
        </authorList>
    </citation>
    <scope>IDENTIFICATION BY MASS SPECTROMETRY [LARGE SCALE ANALYSIS]</scope>
</reference>
<reference key="29">
    <citation type="journal article" date="2011" name="Sci. Signal.">
        <title>System-wide temporal characterization of the proteome and phosphoproteome of human embryonic stem cell differentiation.</title>
        <authorList>
            <person name="Rigbolt K.T."/>
            <person name="Prokhorova T.A."/>
            <person name="Akimov V."/>
            <person name="Henningsen J."/>
            <person name="Johansen P.T."/>
            <person name="Kratchmarova I."/>
            <person name="Kassem M."/>
            <person name="Mann M."/>
            <person name="Olsen J.V."/>
            <person name="Blagoev B."/>
        </authorList>
    </citation>
    <scope>PHOSPHORYLATION [LARGE SCALE ANALYSIS] AT THR-220; SER-260; SER-389; SER-391; SER-393; SER-402; SER-414; THR-416; SER-420; SER-429; SER-431; SER-450; SER-452; SER-463; SER-465; SER-549; SER-551; THR-555; THR-572; THR-574; THR-581; SER-583; SER-597; SER-605; SER-607; SER-616; SER-626; SER-628; SER-636; SER-638; SER-696; SER-705; SER-707; SER-738; SER-740; SER-754; SER-756; SER-769; SER-791; THR-793; SER-795; THR-872 AND SER-874</scope>
    <scope>IDENTIFICATION BY MASS SPECTROMETRY [LARGE SCALE ANALYSIS]</scope>
</reference>
<reference key="30">
    <citation type="journal article" date="2012" name="Proc. Natl. Acad. Sci. U.S.A.">
        <title>N-terminal acetylome analyses and functional insights of the N-terminal acetyltransferase NatB.</title>
        <authorList>
            <person name="Van Damme P."/>
            <person name="Lasa M."/>
            <person name="Polevoda B."/>
            <person name="Gazquez C."/>
            <person name="Elosegui-Artola A."/>
            <person name="Kim D.S."/>
            <person name="De Juan-Pardo E."/>
            <person name="Demeyer K."/>
            <person name="Hole K."/>
            <person name="Larrea E."/>
            <person name="Timmerman E."/>
            <person name="Prieto J."/>
            <person name="Arnesen T."/>
            <person name="Sherman F."/>
            <person name="Gevaert K."/>
            <person name="Aldabe R."/>
        </authorList>
    </citation>
    <scope>ACETYLATION [LARGE SCALE ANALYSIS] AT MET-1</scope>
    <scope>IDENTIFICATION BY MASS SPECTROMETRY [LARGE SCALE ANALYSIS]</scope>
</reference>
<reference key="31">
    <citation type="journal article" date="2013" name="J. Proteome Res.">
        <title>Toward a comprehensive characterization of a human cancer cell phosphoproteome.</title>
        <authorList>
            <person name="Zhou H."/>
            <person name="Di Palma S."/>
            <person name="Preisinger C."/>
            <person name="Peng M."/>
            <person name="Polat A.N."/>
            <person name="Heck A.J."/>
            <person name="Mohammed S."/>
        </authorList>
    </citation>
    <scope>PHOSPHORYLATION [LARGE SCALE ANALYSIS] AT THR-220; SER-234; SER-240; THR-241; SER-260; SER-389; SER-391; SER-393; SER-429; SER-431; SER-450; SER-452; SER-463; SER-465; SER-560; SER-562; SER-605; SER-607; THR-614; SER-616; SER-694; SER-696; SER-713; SER-715; SER-738; SER-740; SER-748; SER-752; SER-754; SER-756; SER-769; SER-775; SER-781; SER-791; SER-797; SER-802; THR-872 AND SER-874</scope>
    <scope>IDENTIFICATION BY MASS SPECTROMETRY [LARGE SCALE ANALYSIS]</scope>
    <source>
        <tissue>Cervix carcinoma</tissue>
        <tissue>Erythroleukemia</tissue>
    </source>
</reference>
<reference key="32">
    <citation type="journal article" date="2014" name="J. Proteomics">
        <title>An enzyme assisted RP-RPLC approach for in-depth analysis of human liver phosphoproteome.</title>
        <authorList>
            <person name="Bian Y."/>
            <person name="Song C."/>
            <person name="Cheng K."/>
            <person name="Dong M."/>
            <person name="Wang F."/>
            <person name="Huang J."/>
            <person name="Sun D."/>
            <person name="Wang L."/>
            <person name="Ye M."/>
            <person name="Zou H."/>
        </authorList>
    </citation>
    <scope>PHOSPHORYLATION [LARGE SCALE ANALYSIS] AT THR-220; SER-234; SER-260; SER-389; SER-402; THR-406; SER-450; SER-524; SER-526; SER-528; SER-530; SER-532; SER-549; SER-551; SER-560; SER-562; TYR-596; SER-597; THR-614; SER-616; SER-638; SER-705; SER-713; THR-718; SER-738; SER-769; SER-773; SER-781; SER-874 AND SER-901</scope>
    <scope>IDENTIFICATION BY MASS SPECTROMETRY [LARGE SCALE ANALYSIS]</scope>
    <source>
        <tissue>Liver</tissue>
    </source>
</reference>
<reference key="33">
    <citation type="journal article" date="2014" name="Nat. Struct. Mol. Biol.">
        <title>Uncovering global SUMOylation signaling networks in a site-specific manner.</title>
        <authorList>
            <person name="Hendriks I.A."/>
            <person name="D'Souza R.C."/>
            <person name="Yang B."/>
            <person name="Verlaan-de Vries M."/>
            <person name="Mann M."/>
            <person name="Vertegaal A.C."/>
        </authorList>
    </citation>
    <scope>SUMOYLATION [LARGE SCALE ANALYSIS] AT LYS-249</scope>
    <scope>IDENTIFICATION BY MASS SPECTROMETRY [LARGE SCALE ANALYSIS]</scope>
</reference>
<reference key="34">
    <citation type="journal article" date="2014" name="Proc. Natl. Acad. Sci. U.S.A.">
        <title>Mapping of SUMO sites and analysis of SUMOylation changes induced by external stimuli.</title>
        <authorList>
            <person name="Impens F."/>
            <person name="Radoshevich L."/>
            <person name="Cossart P."/>
            <person name="Ribet D."/>
        </authorList>
    </citation>
    <scope>SUMOYLATION [LARGE SCALE ANALYSIS] AT LYS-231</scope>
    <scope>IDENTIFICATION BY MASS SPECTROMETRY [LARGE SCALE ANALYSIS]</scope>
</reference>
<reference key="35">
    <citation type="journal article" date="2015" name="Mol. Cell. Proteomics">
        <title>System-wide analysis of SUMOylation dynamics in response to replication stress reveals novel small ubiquitin-like modified target proteins and acceptor lysines relevant for genome stability.</title>
        <authorList>
            <person name="Xiao Z."/>
            <person name="Chang J.G."/>
            <person name="Hendriks I.A."/>
            <person name="Sigurdsson J.O."/>
            <person name="Olsen J.V."/>
            <person name="Vertegaal A.C."/>
        </authorList>
    </citation>
    <scope>SUMOYLATION [LARGE SCALE ANALYSIS] AT LYS-249</scope>
    <scope>IDENTIFICATION BY MASS SPECTROMETRY [LARGE SCALE ANALYSIS]</scope>
</reference>
<reference key="36">
    <citation type="journal article" date="2017" name="Nat. Struct. Mol. Biol.">
        <title>Site-specific mapping of the human SUMO proteome reveals co-modification with phosphorylation.</title>
        <authorList>
            <person name="Hendriks I.A."/>
            <person name="Lyon D."/>
            <person name="Young C."/>
            <person name="Jensen L.J."/>
            <person name="Vertegaal A.C."/>
            <person name="Nielsen M.L."/>
        </authorList>
    </citation>
    <scope>SUMOYLATION [LARGE SCALE ANALYSIS] AT LYS-127; LYS-231; LYS-249; LYS-447; LYS-459; LYS-472 AND LYS-869</scope>
    <scope>IDENTIFICATION BY MASS SPECTROMETRY [LARGE SCALE ANALYSIS]</scope>
</reference>
<reference key="37">
    <citation type="journal article" date="2018" name="Nature">
        <title>Kinase-controlled phase transition of membraneless organelles in mitosis.</title>
        <authorList>
            <person name="Rai A.K."/>
            <person name="Chen J.X."/>
            <person name="Selbach M."/>
            <person name="Pelkmans L."/>
        </authorList>
    </citation>
    <scope>PHOSPHORYLATION</scope>
</reference>
<reference key="38">
    <citation type="journal article" date="2003" name="Genes Dev.">
        <title>Structure and function of the PWI motif: a novel nucleic acid-binding domain that facilitates pre-mRNA processing.</title>
        <authorList>
            <person name="Szymczyna B.R."/>
            <person name="Bowman J."/>
            <person name="McCracken S."/>
            <person name="Pineda-Lucena A."/>
            <person name="Lu Y."/>
            <person name="Cox B."/>
            <person name="Lambermon M."/>
            <person name="Graveley B.R."/>
            <person name="Arrowsmith C.H."/>
            <person name="Blencowe B.J."/>
        </authorList>
    </citation>
    <scope>STRUCTURE BY NMR OF 27-134</scope>
    <scope>FUNCTION IN MRNA 3'-END FORMATION</scope>
    <scope>MUTAGENESIS OF LYS-20; LYS-22 AND LYS-23</scope>
    <scope>DNA-BINDING</scope>
    <scope>RNA-BINDING</scope>
</reference>
<reference evidence="25" key="39">
    <citation type="journal article" date="2021" name="Science">
        <title>Structure of the activated human minor spliceosome.</title>
        <authorList>
            <person name="Bai R."/>
            <person name="Wan R."/>
            <person name="Wang L."/>
            <person name="Xu K."/>
            <person name="Zhang Q."/>
            <person name="Lei J."/>
            <person name="Shi Y."/>
        </authorList>
    </citation>
    <scope>STRUCTURE BY ELECTRON MICROSCOPY (2.89 ANGSTROMS)</scope>
    <scope>SUBUNIT</scope>
</reference>